<reference key="1">
    <citation type="journal article" date="2007" name="PLoS Genet.">
        <title>Patterns and implications of gene gain and loss in the evolution of Prochlorococcus.</title>
        <authorList>
            <person name="Kettler G.C."/>
            <person name="Martiny A.C."/>
            <person name="Huang K."/>
            <person name="Zucker J."/>
            <person name="Coleman M.L."/>
            <person name="Rodrigue S."/>
            <person name="Chen F."/>
            <person name="Lapidus A."/>
            <person name="Ferriera S."/>
            <person name="Johnson J."/>
            <person name="Steglich C."/>
            <person name="Church G.M."/>
            <person name="Richardson P."/>
            <person name="Chisholm S.W."/>
        </authorList>
    </citation>
    <scope>NUCLEOTIDE SEQUENCE [LARGE SCALE GENOMIC DNA]</scope>
    <source>
        <strain>MIT 9301</strain>
    </source>
</reference>
<sequence length="477" mass="53584">MAKDALIVKTTPLPQSRISFELEIPSETCKTCVNETISTISRSAKIPGFRLGKIPKQVLIQRIGITQLHASALEKIIDKSWQEALKIKSIEPLSEPELVDGFESLLAKFSPEKSLKVTLQTDVAPELKLKKSKGLSVEISKTKFDPKSIDEALEKSRNQFANIIPVTNRAAKLGDIAVVSFKGKYKDSGKEIDGGTSESMDLELEKNKMIPGFVEGIVKMKIGDTKTLNLKFPEDYSHEDSRGKEAIFEVNLKDLKEKELPELNDDFAKQSGNKESLKELKKDIEKQLKDNFEKTQKDIKIEALLDALTNELVTEIPKSMIDLEVRNNIEQTAQRFAQQGLDVKSTFTPELVKSLAESTRPQAEKNVQRNLALKALAEKENITIDKSEIDLKMKEYDDVISQSSKQIDIKKLTEVISNDLLKEKLIIWLEENSEVNEKTTKTSKATKTSKTTKATKTATKTTKTTKTTKTQNKKEKK</sequence>
<comment type="function">
    <text evidence="1">Involved in protein export. Acts as a chaperone by maintaining the newly synthesized protein in an open conformation. Functions as a peptidyl-prolyl cis-trans isomerase.</text>
</comment>
<comment type="catalytic activity">
    <reaction evidence="1">
        <text>[protein]-peptidylproline (omega=180) = [protein]-peptidylproline (omega=0)</text>
        <dbReference type="Rhea" id="RHEA:16237"/>
        <dbReference type="Rhea" id="RHEA-COMP:10747"/>
        <dbReference type="Rhea" id="RHEA-COMP:10748"/>
        <dbReference type="ChEBI" id="CHEBI:83833"/>
        <dbReference type="ChEBI" id="CHEBI:83834"/>
        <dbReference type="EC" id="5.2.1.8"/>
    </reaction>
</comment>
<comment type="subcellular location">
    <subcellularLocation>
        <location>Cytoplasm</location>
    </subcellularLocation>
    <text evidence="1">About half TF is bound to the ribosome near the polypeptide exit tunnel while the other half is free in the cytoplasm.</text>
</comment>
<comment type="domain">
    <text evidence="1">Consists of 3 domains; the N-terminus binds the ribosome, the middle domain has PPIase activity, while the C-terminus has intrinsic chaperone activity on its own.</text>
</comment>
<comment type="similarity">
    <text evidence="1">Belongs to the FKBP-type PPIase family. Tig subfamily.</text>
</comment>
<dbReference type="EC" id="5.2.1.8" evidence="1"/>
<dbReference type="EMBL" id="CP000576">
    <property type="protein sequence ID" value="ABO18468.1"/>
    <property type="molecule type" value="Genomic_DNA"/>
</dbReference>
<dbReference type="RefSeq" id="WP_011863752.1">
    <property type="nucleotide sequence ID" value="NC_009091.1"/>
</dbReference>
<dbReference type="SMR" id="A3PFE3"/>
<dbReference type="STRING" id="167546.P9301_18451"/>
<dbReference type="KEGG" id="pmg:P9301_18451"/>
<dbReference type="eggNOG" id="COG0544">
    <property type="taxonomic scope" value="Bacteria"/>
</dbReference>
<dbReference type="HOGENOM" id="CLU_033058_3_1_3"/>
<dbReference type="OrthoDB" id="9767721at2"/>
<dbReference type="Proteomes" id="UP000001430">
    <property type="component" value="Chromosome"/>
</dbReference>
<dbReference type="GO" id="GO:0005737">
    <property type="term" value="C:cytoplasm"/>
    <property type="evidence" value="ECO:0007669"/>
    <property type="project" value="UniProtKB-SubCell"/>
</dbReference>
<dbReference type="GO" id="GO:0003755">
    <property type="term" value="F:peptidyl-prolyl cis-trans isomerase activity"/>
    <property type="evidence" value="ECO:0007669"/>
    <property type="project" value="UniProtKB-UniRule"/>
</dbReference>
<dbReference type="GO" id="GO:0044183">
    <property type="term" value="F:protein folding chaperone"/>
    <property type="evidence" value="ECO:0007669"/>
    <property type="project" value="TreeGrafter"/>
</dbReference>
<dbReference type="GO" id="GO:0043022">
    <property type="term" value="F:ribosome binding"/>
    <property type="evidence" value="ECO:0007669"/>
    <property type="project" value="TreeGrafter"/>
</dbReference>
<dbReference type="GO" id="GO:0051083">
    <property type="term" value="P:'de novo' cotranslational protein folding"/>
    <property type="evidence" value="ECO:0007669"/>
    <property type="project" value="TreeGrafter"/>
</dbReference>
<dbReference type="GO" id="GO:0051301">
    <property type="term" value="P:cell division"/>
    <property type="evidence" value="ECO:0007669"/>
    <property type="project" value="UniProtKB-KW"/>
</dbReference>
<dbReference type="GO" id="GO:0061077">
    <property type="term" value="P:chaperone-mediated protein folding"/>
    <property type="evidence" value="ECO:0007669"/>
    <property type="project" value="TreeGrafter"/>
</dbReference>
<dbReference type="GO" id="GO:0015031">
    <property type="term" value="P:protein transport"/>
    <property type="evidence" value="ECO:0007669"/>
    <property type="project" value="UniProtKB-UniRule"/>
</dbReference>
<dbReference type="GO" id="GO:0043335">
    <property type="term" value="P:protein unfolding"/>
    <property type="evidence" value="ECO:0007669"/>
    <property type="project" value="TreeGrafter"/>
</dbReference>
<dbReference type="FunFam" id="3.10.50.40:FF:000001">
    <property type="entry name" value="Trigger factor"/>
    <property type="match status" value="1"/>
</dbReference>
<dbReference type="FunFam" id="3.30.70.1050:FF:000004">
    <property type="entry name" value="Trigger factor"/>
    <property type="match status" value="1"/>
</dbReference>
<dbReference type="Gene3D" id="3.10.50.40">
    <property type="match status" value="1"/>
</dbReference>
<dbReference type="Gene3D" id="3.30.70.1050">
    <property type="entry name" value="Trigger factor ribosome-binding domain"/>
    <property type="match status" value="1"/>
</dbReference>
<dbReference type="Gene3D" id="1.10.3120.10">
    <property type="entry name" value="Trigger factor, C-terminal domain"/>
    <property type="match status" value="1"/>
</dbReference>
<dbReference type="HAMAP" id="MF_00303">
    <property type="entry name" value="Trigger_factor_Tig"/>
    <property type="match status" value="1"/>
</dbReference>
<dbReference type="InterPro" id="IPR046357">
    <property type="entry name" value="PPIase_dom_sf"/>
</dbReference>
<dbReference type="InterPro" id="IPR001179">
    <property type="entry name" value="PPIase_FKBP_dom"/>
</dbReference>
<dbReference type="InterPro" id="IPR005215">
    <property type="entry name" value="Trig_fac"/>
</dbReference>
<dbReference type="InterPro" id="IPR008880">
    <property type="entry name" value="Trigger_fac_C"/>
</dbReference>
<dbReference type="InterPro" id="IPR037041">
    <property type="entry name" value="Trigger_fac_C_sf"/>
</dbReference>
<dbReference type="InterPro" id="IPR008881">
    <property type="entry name" value="Trigger_fac_ribosome-bd_bac"/>
</dbReference>
<dbReference type="InterPro" id="IPR036611">
    <property type="entry name" value="Trigger_fac_ribosome-bd_sf"/>
</dbReference>
<dbReference type="InterPro" id="IPR027304">
    <property type="entry name" value="Trigger_fact/SurA_dom_sf"/>
</dbReference>
<dbReference type="NCBIfam" id="TIGR00115">
    <property type="entry name" value="tig"/>
    <property type="match status" value="1"/>
</dbReference>
<dbReference type="PANTHER" id="PTHR30560">
    <property type="entry name" value="TRIGGER FACTOR CHAPERONE AND PEPTIDYL-PROLYL CIS/TRANS ISOMERASE"/>
    <property type="match status" value="1"/>
</dbReference>
<dbReference type="PANTHER" id="PTHR30560:SF3">
    <property type="entry name" value="TRIGGER FACTOR-LIKE PROTEIN TIG, CHLOROPLASTIC"/>
    <property type="match status" value="1"/>
</dbReference>
<dbReference type="Pfam" id="PF00254">
    <property type="entry name" value="FKBP_C"/>
    <property type="match status" value="1"/>
</dbReference>
<dbReference type="Pfam" id="PF05698">
    <property type="entry name" value="Trigger_C"/>
    <property type="match status" value="1"/>
</dbReference>
<dbReference type="Pfam" id="PF05697">
    <property type="entry name" value="Trigger_N"/>
    <property type="match status" value="1"/>
</dbReference>
<dbReference type="PIRSF" id="PIRSF003095">
    <property type="entry name" value="Trigger_factor"/>
    <property type="match status" value="1"/>
</dbReference>
<dbReference type="SUPFAM" id="SSF54534">
    <property type="entry name" value="FKBP-like"/>
    <property type="match status" value="1"/>
</dbReference>
<dbReference type="SUPFAM" id="SSF109998">
    <property type="entry name" value="Triger factor/SurA peptide-binding domain-like"/>
    <property type="match status" value="1"/>
</dbReference>
<dbReference type="SUPFAM" id="SSF102735">
    <property type="entry name" value="Trigger factor ribosome-binding domain"/>
    <property type="match status" value="1"/>
</dbReference>
<dbReference type="PROSITE" id="PS50059">
    <property type="entry name" value="FKBP_PPIASE"/>
    <property type="match status" value="1"/>
</dbReference>
<organism>
    <name type="scientific">Prochlorococcus marinus (strain MIT 9301)</name>
    <dbReference type="NCBI Taxonomy" id="167546"/>
    <lineage>
        <taxon>Bacteria</taxon>
        <taxon>Bacillati</taxon>
        <taxon>Cyanobacteriota</taxon>
        <taxon>Cyanophyceae</taxon>
        <taxon>Synechococcales</taxon>
        <taxon>Prochlorococcaceae</taxon>
        <taxon>Prochlorococcus</taxon>
    </lineage>
</organism>
<evidence type="ECO:0000255" key="1">
    <source>
        <dbReference type="HAMAP-Rule" id="MF_00303"/>
    </source>
</evidence>
<evidence type="ECO:0000256" key="2">
    <source>
        <dbReference type="SAM" id="MobiDB-lite"/>
    </source>
</evidence>
<keyword id="KW-0131">Cell cycle</keyword>
<keyword id="KW-0132">Cell division</keyword>
<keyword id="KW-0143">Chaperone</keyword>
<keyword id="KW-0963">Cytoplasm</keyword>
<keyword id="KW-0413">Isomerase</keyword>
<keyword id="KW-1185">Reference proteome</keyword>
<keyword id="KW-0697">Rotamase</keyword>
<feature type="chain" id="PRO_1000022726" description="Trigger factor">
    <location>
        <begin position="1"/>
        <end position="477"/>
    </location>
</feature>
<feature type="domain" description="PPIase FKBP-type" evidence="1">
    <location>
        <begin position="174"/>
        <end position="261"/>
    </location>
</feature>
<feature type="region of interest" description="Disordered" evidence="2">
    <location>
        <begin position="435"/>
        <end position="477"/>
    </location>
</feature>
<feature type="compositionally biased region" description="Low complexity" evidence="2">
    <location>
        <begin position="442"/>
        <end position="470"/>
    </location>
</feature>
<proteinExistence type="inferred from homology"/>
<gene>
    <name evidence="1" type="primary">tig</name>
    <name type="ordered locus">P9301_18451</name>
</gene>
<protein>
    <recommendedName>
        <fullName evidence="1">Trigger factor</fullName>
        <shortName evidence="1">TF</shortName>
        <ecNumber evidence="1">5.2.1.8</ecNumber>
    </recommendedName>
    <alternativeName>
        <fullName evidence="1">PPIase</fullName>
    </alternativeName>
</protein>
<name>TIG_PROM0</name>
<accession>A3PFE3</accession>